<accession>Q5GYR2</accession>
<feature type="chain" id="PRO_0000094395" description="Elongation factor P-like protein">
    <location>
        <begin position="1"/>
        <end position="188"/>
    </location>
</feature>
<gene>
    <name type="ordered locus">XOO2905</name>
</gene>
<reference key="1">
    <citation type="journal article" date="2005" name="Nucleic Acids Res.">
        <title>The genome sequence of Xanthomonas oryzae pathovar oryzae KACC10331, the bacterial blight pathogen of rice.</title>
        <authorList>
            <person name="Lee B.-M."/>
            <person name="Park Y.-J."/>
            <person name="Park D.-S."/>
            <person name="Kang H.-W."/>
            <person name="Kim J.-G."/>
            <person name="Song E.-S."/>
            <person name="Park I.-C."/>
            <person name="Yoon U.-H."/>
            <person name="Hahn J.-H."/>
            <person name="Koo B.-S."/>
            <person name="Lee G.-B."/>
            <person name="Kim H."/>
            <person name="Park H.-S."/>
            <person name="Yoon K.-O."/>
            <person name="Kim J.-H."/>
            <person name="Jung C.-H."/>
            <person name="Koh N.-H."/>
            <person name="Seo J.-S."/>
            <person name="Go S.-J."/>
        </authorList>
    </citation>
    <scope>NUCLEOTIDE SEQUENCE [LARGE SCALE GENOMIC DNA]</scope>
    <source>
        <strain>KACC10331 / KXO85</strain>
    </source>
</reference>
<proteinExistence type="inferred from homology"/>
<keyword id="KW-1185">Reference proteome</keyword>
<sequence length="188" mass="20590">MKANDIKKGNVVEYNGGIYQIRDIERSSPQGRGGNVRFRFIMYSVPGGVKTDASLDADDNLPDVELLRRLSTFSYKDGEAFVFMDDEDFTPYTLDADVIGTDAGYITDGLTGIYVQVIDDQPVAVQLPQTVTLEVVETPPELKGGTATKRPKPAKLNTGMEIMVPEYITNGERVLVNTTTGEFAGRAD</sequence>
<dbReference type="EMBL" id="AE013598">
    <property type="protein sequence ID" value="AAW76159.1"/>
    <property type="molecule type" value="Genomic_DNA"/>
</dbReference>
<dbReference type="SMR" id="Q5GYR2"/>
<dbReference type="STRING" id="291331.XOO2905"/>
<dbReference type="KEGG" id="xoo:XOO2905"/>
<dbReference type="HOGENOM" id="CLU_074944_2_0_6"/>
<dbReference type="Proteomes" id="UP000006735">
    <property type="component" value="Chromosome"/>
</dbReference>
<dbReference type="GO" id="GO:0005737">
    <property type="term" value="C:cytoplasm"/>
    <property type="evidence" value="ECO:0007669"/>
    <property type="project" value="InterPro"/>
</dbReference>
<dbReference type="GO" id="GO:0003746">
    <property type="term" value="F:translation elongation factor activity"/>
    <property type="evidence" value="ECO:0007669"/>
    <property type="project" value="UniProtKB-UniRule"/>
</dbReference>
<dbReference type="GO" id="GO:0043043">
    <property type="term" value="P:peptide biosynthetic process"/>
    <property type="evidence" value="ECO:0007669"/>
    <property type="project" value="InterPro"/>
</dbReference>
<dbReference type="CDD" id="cd04470">
    <property type="entry name" value="S1_EF-P_repeat_1"/>
    <property type="match status" value="1"/>
</dbReference>
<dbReference type="CDD" id="cd05794">
    <property type="entry name" value="S1_EF-P_repeat_2"/>
    <property type="match status" value="1"/>
</dbReference>
<dbReference type="FunFam" id="2.40.50.140:FF:000004">
    <property type="entry name" value="Elongation factor P"/>
    <property type="match status" value="1"/>
</dbReference>
<dbReference type="FunFam" id="2.40.50.140:FF:000233">
    <property type="entry name" value="Elongation factor P-like protein"/>
    <property type="match status" value="1"/>
</dbReference>
<dbReference type="Gene3D" id="2.30.30.30">
    <property type="match status" value="1"/>
</dbReference>
<dbReference type="Gene3D" id="2.40.50.140">
    <property type="entry name" value="Nucleic acid-binding proteins"/>
    <property type="match status" value="2"/>
</dbReference>
<dbReference type="HAMAP" id="MF_00646">
    <property type="entry name" value="EFP"/>
    <property type="match status" value="1"/>
</dbReference>
<dbReference type="InterPro" id="IPR015365">
    <property type="entry name" value="Elong-fact-P_C"/>
</dbReference>
<dbReference type="InterPro" id="IPR012340">
    <property type="entry name" value="NA-bd_OB-fold"/>
</dbReference>
<dbReference type="InterPro" id="IPR014722">
    <property type="entry name" value="Rib_uL2_dom2"/>
</dbReference>
<dbReference type="InterPro" id="IPR020599">
    <property type="entry name" value="Transl_elong_fac_P/YeiP"/>
</dbReference>
<dbReference type="InterPro" id="IPR013185">
    <property type="entry name" value="Transl_elong_KOW-like"/>
</dbReference>
<dbReference type="InterPro" id="IPR011897">
    <property type="entry name" value="Transl_elong_p-like_YeiP"/>
</dbReference>
<dbReference type="InterPro" id="IPR001059">
    <property type="entry name" value="Transl_elong_P/YeiP_cen"/>
</dbReference>
<dbReference type="InterPro" id="IPR013852">
    <property type="entry name" value="Transl_elong_P/YeiP_CS"/>
</dbReference>
<dbReference type="InterPro" id="IPR008991">
    <property type="entry name" value="Translation_prot_SH3-like_sf"/>
</dbReference>
<dbReference type="NCBIfam" id="NF003392">
    <property type="entry name" value="PRK04542.1"/>
    <property type="match status" value="1"/>
</dbReference>
<dbReference type="NCBIfam" id="TIGR02178">
    <property type="entry name" value="yeiP"/>
    <property type="match status" value="1"/>
</dbReference>
<dbReference type="PANTHER" id="PTHR30053">
    <property type="entry name" value="ELONGATION FACTOR P"/>
    <property type="match status" value="1"/>
</dbReference>
<dbReference type="PANTHER" id="PTHR30053:SF14">
    <property type="entry name" value="TRANSLATION ELONGATION FACTOR KOW-LIKE DOMAIN-CONTAINING PROTEIN"/>
    <property type="match status" value="1"/>
</dbReference>
<dbReference type="Pfam" id="PF01132">
    <property type="entry name" value="EFP"/>
    <property type="match status" value="1"/>
</dbReference>
<dbReference type="Pfam" id="PF08207">
    <property type="entry name" value="EFP_N"/>
    <property type="match status" value="1"/>
</dbReference>
<dbReference type="Pfam" id="PF09285">
    <property type="entry name" value="Elong-fact-P_C"/>
    <property type="match status" value="1"/>
</dbReference>
<dbReference type="PIRSF" id="PIRSF005901">
    <property type="entry name" value="EF-P"/>
    <property type="match status" value="1"/>
</dbReference>
<dbReference type="SMART" id="SM01185">
    <property type="entry name" value="EFP"/>
    <property type="match status" value="1"/>
</dbReference>
<dbReference type="SMART" id="SM00841">
    <property type="entry name" value="Elong-fact-P_C"/>
    <property type="match status" value="1"/>
</dbReference>
<dbReference type="SUPFAM" id="SSF50249">
    <property type="entry name" value="Nucleic acid-binding proteins"/>
    <property type="match status" value="2"/>
</dbReference>
<dbReference type="SUPFAM" id="SSF50104">
    <property type="entry name" value="Translation proteins SH3-like domain"/>
    <property type="match status" value="1"/>
</dbReference>
<dbReference type="PROSITE" id="PS01275">
    <property type="entry name" value="EFP"/>
    <property type="match status" value="1"/>
</dbReference>
<comment type="similarity">
    <text evidence="1">Belongs to the elongation factor P family.</text>
</comment>
<protein>
    <recommendedName>
        <fullName evidence="1">Elongation factor P-like protein</fullName>
    </recommendedName>
</protein>
<name>EFPL_XANOR</name>
<organism>
    <name type="scientific">Xanthomonas oryzae pv. oryzae (strain KACC10331 / KXO85)</name>
    <dbReference type="NCBI Taxonomy" id="291331"/>
    <lineage>
        <taxon>Bacteria</taxon>
        <taxon>Pseudomonadati</taxon>
        <taxon>Pseudomonadota</taxon>
        <taxon>Gammaproteobacteria</taxon>
        <taxon>Lysobacterales</taxon>
        <taxon>Lysobacteraceae</taxon>
        <taxon>Xanthomonas</taxon>
    </lineage>
</organism>
<evidence type="ECO:0000255" key="1">
    <source>
        <dbReference type="HAMAP-Rule" id="MF_00646"/>
    </source>
</evidence>